<accession>Q6GBT4</accession>
<proteinExistence type="inferred from homology"/>
<name>Y511_STAAS</name>
<sequence length="321" mass="36053">MKKIMITGALGQIGTELVVKCREIYGTDNVLATDIREPEADSPVQNGPFEILDVTDRDRMFELVRDFEADSLMHMAALLSATAEKNPILAWDLNMGGLMNALEAARTYNLHFFTPSSIGAFGDSTPKVNTPQVTIQQPTTMYGVNKVAGELLCQYYFKRFGVDTRSVRFPGLISHVKEPGGGTTDYAVEIYFKAVREGHYTSFIDKGTYMDMMYMDDAIEAIIKLMEADDAKLETRNGYNLSAMSFDPEMVKEAIQEYYPNFTLDYDVDPIRQGIANSWPDSIDTSCSRGEWGFDPKYDLASMTKLMLEAIEQKDTVKNNN</sequence>
<protein>
    <recommendedName>
        <fullName>Uncharacterized epimerase/dehydratase SAS0511</fullName>
    </recommendedName>
</protein>
<evidence type="ECO:0000305" key="1"/>
<dbReference type="EMBL" id="BX571857">
    <property type="protein sequence ID" value="CAG42286.1"/>
    <property type="molecule type" value="Genomic_DNA"/>
</dbReference>
<dbReference type="RefSeq" id="WP_000723301.1">
    <property type="nucleotide sequence ID" value="NC_002953.3"/>
</dbReference>
<dbReference type="SMR" id="Q6GBT4"/>
<dbReference type="KEGG" id="sas:SAS0511"/>
<dbReference type="HOGENOM" id="CLU_007383_19_1_9"/>
<dbReference type="GO" id="GO:0008743">
    <property type="term" value="F:L-threonine 3-dehydrogenase activity"/>
    <property type="evidence" value="ECO:0007669"/>
    <property type="project" value="TreeGrafter"/>
</dbReference>
<dbReference type="GO" id="GO:0006567">
    <property type="term" value="P:threonine catabolic process"/>
    <property type="evidence" value="ECO:0007669"/>
    <property type="project" value="TreeGrafter"/>
</dbReference>
<dbReference type="FunFam" id="3.40.50.720:FF:000077">
    <property type="entry name" value="L-threonine 3-dehydrogenase, mitochondrial"/>
    <property type="match status" value="1"/>
</dbReference>
<dbReference type="Gene3D" id="3.40.50.720">
    <property type="entry name" value="NAD(P)-binding Rossmann-like Domain"/>
    <property type="match status" value="1"/>
</dbReference>
<dbReference type="InterPro" id="IPR001509">
    <property type="entry name" value="Epimerase_deHydtase"/>
</dbReference>
<dbReference type="InterPro" id="IPR036291">
    <property type="entry name" value="NAD(P)-bd_dom_sf"/>
</dbReference>
<dbReference type="InterPro" id="IPR051225">
    <property type="entry name" value="NAD(P)_epim/dehydratase"/>
</dbReference>
<dbReference type="PANTHER" id="PTHR42687">
    <property type="entry name" value="L-THREONINE 3-DEHYDROGENASE"/>
    <property type="match status" value="1"/>
</dbReference>
<dbReference type="PANTHER" id="PTHR42687:SF1">
    <property type="entry name" value="L-THREONINE 3-DEHYDROGENASE, MITOCHONDRIAL"/>
    <property type="match status" value="1"/>
</dbReference>
<dbReference type="Pfam" id="PF01370">
    <property type="entry name" value="Epimerase"/>
    <property type="match status" value="1"/>
</dbReference>
<dbReference type="SUPFAM" id="SSF51735">
    <property type="entry name" value="NAD(P)-binding Rossmann-fold domains"/>
    <property type="match status" value="1"/>
</dbReference>
<reference key="1">
    <citation type="journal article" date="2004" name="Proc. Natl. Acad. Sci. U.S.A.">
        <title>Complete genomes of two clinical Staphylococcus aureus strains: evidence for the rapid evolution of virulence and drug resistance.</title>
        <authorList>
            <person name="Holden M.T.G."/>
            <person name="Feil E.J."/>
            <person name="Lindsay J.A."/>
            <person name="Peacock S.J."/>
            <person name="Day N.P.J."/>
            <person name="Enright M.C."/>
            <person name="Foster T.J."/>
            <person name="Moore C.E."/>
            <person name="Hurst L."/>
            <person name="Atkin R."/>
            <person name="Barron A."/>
            <person name="Bason N."/>
            <person name="Bentley S.D."/>
            <person name="Chillingworth C."/>
            <person name="Chillingworth T."/>
            <person name="Churcher C."/>
            <person name="Clark L."/>
            <person name="Corton C."/>
            <person name="Cronin A."/>
            <person name="Doggett J."/>
            <person name="Dowd L."/>
            <person name="Feltwell T."/>
            <person name="Hance Z."/>
            <person name="Harris B."/>
            <person name="Hauser H."/>
            <person name="Holroyd S."/>
            <person name="Jagels K."/>
            <person name="James K.D."/>
            <person name="Lennard N."/>
            <person name="Line A."/>
            <person name="Mayes R."/>
            <person name="Moule S."/>
            <person name="Mungall K."/>
            <person name="Ormond D."/>
            <person name="Quail M.A."/>
            <person name="Rabbinowitsch E."/>
            <person name="Rutherford K.M."/>
            <person name="Sanders M."/>
            <person name="Sharp S."/>
            <person name="Simmonds M."/>
            <person name="Stevens K."/>
            <person name="Whitehead S."/>
            <person name="Barrell B.G."/>
            <person name="Spratt B.G."/>
            <person name="Parkhill J."/>
        </authorList>
    </citation>
    <scope>NUCLEOTIDE SEQUENCE [LARGE SCALE GENOMIC DNA]</scope>
    <source>
        <strain>MSSA476</strain>
    </source>
</reference>
<organism>
    <name type="scientific">Staphylococcus aureus (strain MSSA476)</name>
    <dbReference type="NCBI Taxonomy" id="282459"/>
    <lineage>
        <taxon>Bacteria</taxon>
        <taxon>Bacillati</taxon>
        <taxon>Bacillota</taxon>
        <taxon>Bacilli</taxon>
        <taxon>Bacillales</taxon>
        <taxon>Staphylococcaceae</taxon>
        <taxon>Staphylococcus</taxon>
    </lineage>
</organism>
<feature type="chain" id="PRO_0000270849" description="Uncharacterized epimerase/dehydratase SAS0511">
    <location>
        <begin position="1"/>
        <end position="321"/>
    </location>
</feature>
<gene>
    <name type="ordered locus">SAS0511</name>
</gene>
<comment type="similarity">
    <text evidence="1">Belongs to the NAD(P)-dependent epimerase/dehydratase family.</text>
</comment>